<keyword id="KW-0275">Fatty acid biosynthesis</keyword>
<keyword id="KW-0276">Fatty acid metabolism</keyword>
<keyword id="KW-0444">Lipid biosynthesis</keyword>
<keyword id="KW-0443">Lipid metabolism</keyword>
<keyword id="KW-0496">Mitochondrion</keyword>
<keyword id="KW-0521">NADP</keyword>
<keyword id="KW-0560">Oxidoreductase</keyword>
<keyword id="KW-1185">Reference proteome</keyword>
<keyword id="KW-0809">Transit peptide</keyword>
<comment type="function">
    <text evidence="2">Catalyzes the NADPH-dependent reduction of trans-2-enoyl thioesters in mitochondrial fatty acid synthesis (fatty acid synthesis type II). Fatty acid chain elongation in mitochondria uses acyl carrier protein (ACP) as an acyl group carrier, but the enzyme accepts both ACP and CoA thioesters as substrates in vitro. Required for respiration and the maintenance of the mitochondrial compartment.</text>
</comment>
<comment type="catalytic activity">
    <reaction evidence="2">
        <text>a 2,3-saturated acyl-[ACP] + NADP(+) = a (2E)-enoyl-[ACP] + NADPH + H(+)</text>
        <dbReference type="Rhea" id="RHEA:22564"/>
        <dbReference type="Rhea" id="RHEA-COMP:9925"/>
        <dbReference type="Rhea" id="RHEA-COMP:9926"/>
        <dbReference type="ChEBI" id="CHEBI:15378"/>
        <dbReference type="ChEBI" id="CHEBI:57783"/>
        <dbReference type="ChEBI" id="CHEBI:58349"/>
        <dbReference type="ChEBI" id="CHEBI:78784"/>
        <dbReference type="ChEBI" id="CHEBI:78785"/>
        <dbReference type="EC" id="1.3.1.104"/>
    </reaction>
</comment>
<comment type="subunit">
    <text evidence="3">Homodimer.</text>
</comment>
<comment type="subcellular location">
    <subcellularLocation>
        <location evidence="2">Mitochondrion matrix</location>
    </subcellularLocation>
</comment>
<comment type="similarity">
    <text evidence="5">Belongs to the zinc-containing alcohol dehydrogenase family. Quinone oxidoreductase subfamily.</text>
</comment>
<comment type="sequence caution" evidence="5">
    <conflict type="erroneous initiation">
        <sequence resource="EMBL-CDS" id="CAG58058"/>
    </conflict>
</comment>
<accession>Q6FXN7</accession>
<name>ETR1_CANGA</name>
<evidence type="ECO:0000250" key="1"/>
<evidence type="ECO:0000250" key="2">
    <source>
        <dbReference type="UniProtKB" id="P38071"/>
    </source>
</evidence>
<evidence type="ECO:0000250" key="3">
    <source>
        <dbReference type="UniProtKB" id="Q8WZM3"/>
    </source>
</evidence>
<evidence type="ECO:0000255" key="4"/>
<evidence type="ECO:0000305" key="5"/>
<organism>
    <name type="scientific">Candida glabrata (strain ATCC 2001 / BCRC 20586 / JCM 3761 / NBRC 0622 / NRRL Y-65 / CBS 138)</name>
    <name type="common">Yeast</name>
    <name type="synonym">Nakaseomyces glabratus</name>
    <dbReference type="NCBI Taxonomy" id="284593"/>
    <lineage>
        <taxon>Eukaryota</taxon>
        <taxon>Fungi</taxon>
        <taxon>Dikarya</taxon>
        <taxon>Ascomycota</taxon>
        <taxon>Saccharomycotina</taxon>
        <taxon>Saccharomycetes</taxon>
        <taxon>Saccharomycetales</taxon>
        <taxon>Saccharomycetaceae</taxon>
        <taxon>Nakaseomyces</taxon>
    </lineage>
</organism>
<proteinExistence type="inferred from homology"/>
<reference key="1">
    <citation type="journal article" date="2004" name="Nature">
        <title>Genome evolution in yeasts.</title>
        <authorList>
            <person name="Dujon B."/>
            <person name="Sherman D."/>
            <person name="Fischer G."/>
            <person name="Durrens P."/>
            <person name="Casaregola S."/>
            <person name="Lafontaine I."/>
            <person name="de Montigny J."/>
            <person name="Marck C."/>
            <person name="Neuveglise C."/>
            <person name="Talla E."/>
            <person name="Goffard N."/>
            <person name="Frangeul L."/>
            <person name="Aigle M."/>
            <person name="Anthouard V."/>
            <person name="Babour A."/>
            <person name="Barbe V."/>
            <person name="Barnay S."/>
            <person name="Blanchin S."/>
            <person name="Beckerich J.-M."/>
            <person name="Beyne E."/>
            <person name="Bleykasten C."/>
            <person name="Boisrame A."/>
            <person name="Boyer J."/>
            <person name="Cattolico L."/>
            <person name="Confanioleri F."/>
            <person name="de Daruvar A."/>
            <person name="Despons L."/>
            <person name="Fabre E."/>
            <person name="Fairhead C."/>
            <person name="Ferry-Dumazet H."/>
            <person name="Groppi A."/>
            <person name="Hantraye F."/>
            <person name="Hennequin C."/>
            <person name="Jauniaux N."/>
            <person name="Joyet P."/>
            <person name="Kachouri R."/>
            <person name="Kerrest A."/>
            <person name="Koszul R."/>
            <person name="Lemaire M."/>
            <person name="Lesur I."/>
            <person name="Ma L."/>
            <person name="Muller H."/>
            <person name="Nicaud J.-M."/>
            <person name="Nikolski M."/>
            <person name="Oztas S."/>
            <person name="Ozier-Kalogeropoulos O."/>
            <person name="Pellenz S."/>
            <person name="Potier S."/>
            <person name="Richard G.-F."/>
            <person name="Straub M.-L."/>
            <person name="Suleau A."/>
            <person name="Swennen D."/>
            <person name="Tekaia F."/>
            <person name="Wesolowski-Louvel M."/>
            <person name="Westhof E."/>
            <person name="Wirth B."/>
            <person name="Zeniou-Meyer M."/>
            <person name="Zivanovic Y."/>
            <person name="Bolotin-Fukuhara M."/>
            <person name="Thierry A."/>
            <person name="Bouchier C."/>
            <person name="Caudron B."/>
            <person name="Scarpelli C."/>
            <person name="Gaillardin C."/>
            <person name="Weissenbach J."/>
            <person name="Wincker P."/>
            <person name="Souciet J.-L."/>
        </authorList>
    </citation>
    <scope>NUCLEOTIDE SEQUENCE [LARGE SCALE GENOMIC DNA]</scope>
    <source>
        <strain>ATCC 2001 / BCRC 20586 / JCM 3761 / NBRC 0622 / NRRL Y-65 / CBS 138</strain>
    </source>
</reference>
<protein>
    <recommendedName>
        <fullName>Enoyl-[acyl-carrier-protein] reductase, mitochondrial</fullName>
        <ecNumber>1.3.1.104</ecNumber>
    </recommendedName>
    <alternativeName>
        <fullName>2-enoyl thioester reductase</fullName>
    </alternativeName>
</protein>
<sequence length="385" mass="42620">MSGLRAASVFSPVFKRMASSIPSQFKSIIYNSHSLEDCTGVLSVHNYKPKQDLNKSVVLRTLAFPINPSDINQLQGVYPSLPEKTLDYSTEKPSAIAGNEGLFEVVSLPEHGDHGELKVGDWVIPVQANQGTWSNYRVFDKASDLIKVNGLDLYSAATVSVNGCTAYQLVNNYVDWNADGNEWLIQNAGTSGVSKFVTQIAKARGVKTLSVIRDRDNFEEVAEVLEQKFGATKVISESQNNDKDFGKKELPKVLGDKARVRLALNSVGGKSSSAIARKLERDALMLTYGGMSKQPVTIPTSLHIFKGLTSKGYWVTENNKRDPTDKVNTIKGFIDLYKQGKIISPEEEIETMEWDANNGDDQQLLELVKRGITEKGKKKMVLLKW</sequence>
<dbReference type="EC" id="1.3.1.104"/>
<dbReference type="EMBL" id="CR380948">
    <property type="protein sequence ID" value="CAG58058.1"/>
    <property type="status" value="ALT_INIT"/>
    <property type="molecule type" value="Genomic_DNA"/>
</dbReference>
<dbReference type="RefSeq" id="XP_445158.1">
    <property type="nucleotide sequence ID" value="XM_445158.1"/>
</dbReference>
<dbReference type="SMR" id="Q6FXN7"/>
<dbReference type="FunCoup" id="Q6FXN7">
    <property type="interactions" value="738"/>
</dbReference>
<dbReference type="STRING" id="284593.Q6FXN7"/>
<dbReference type="KEGG" id="cgr:2886666"/>
<dbReference type="eggNOG" id="KOG0025">
    <property type="taxonomic scope" value="Eukaryota"/>
</dbReference>
<dbReference type="HOGENOM" id="CLU_026673_17_0_1"/>
<dbReference type="InParanoid" id="Q6FXN7"/>
<dbReference type="Proteomes" id="UP000002428">
    <property type="component" value="Chromosome B"/>
</dbReference>
<dbReference type="GO" id="GO:0005759">
    <property type="term" value="C:mitochondrial matrix"/>
    <property type="evidence" value="ECO:0007669"/>
    <property type="project" value="UniProtKB-SubCell"/>
</dbReference>
<dbReference type="GO" id="GO:0003700">
    <property type="term" value="F:DNA-binding transcription factor activity"/>
    <property type="evidence" value="ECO:0007669"/>
    <property type="project" value="InterPro"/>
</dbReference>
<dbReference type="GO" id="GO:0141148">
    <property type="term" value="F:enoyl-[acyl-carrier-protein] reductase (NADPH) activity"/>
    <property type="evidence" value="ECO:0007669"/>
    <property type="project" value="UniProtKB-EC"/>
</dbReference>
<dbReference type="GO" id="GO:0043565">
    <property type="term" value="F:sequence-specific DNA binding"/>
    <property type="evidence" value="ECO:0007669"/>
    <property type="project" value="InterPro"/>
</dbReference>
<dbReference type="GO" id="GO:0006633">
    <property type="term" value="P:fatty acid biosynthetic process"/>
    <property type="evidence" value="ECO:0007669"/>
    <property type="project" value="UniProtKB-KW"/>
</dbReference>
<dbReference type="CDD" id="cd08290">
    <property type="entry name" value="ETR"/>
    <property type="match status" value="1"/>
</dbReference>
<dbReference type="FunFam" id="3.90.180.10:FF:000046">
    <property type="entry name" value="2-enoyl thioester reductase"/>
    <property type="match status" value="1"/>
</dbReference>
<dbReference type="FunFam" id="3.40.50.720:FF:000112">
    <property type="entry name" value="Enoyl-[acyl-carrier-protein] reductase 1, mitochondrial"/>
    <property type="match status" value="1"/>
</dbReference>
<dbReference type="Gene3D" id="3.90.180.10">
    <property type="entry name" value="Medium-chain alcohol dehydrogenases, catalytic domain"/>
    <property type="match status" value="1"/>
</dbReference>
<dbReference type="Gene3D" id="3.40.50.720">
    <property type="entry name" value="NAD(P)-binding Rossmann-like Domain"/>
    <property type="match status" value="1"/>
</dbReference>
<dbReference type="InterPro" id="IPR011032">
    <property type="entry name" value="GroES-like_sf"/>
</dbReference>
<dbReference type="InterPro" id="IPR018060">
    <property type="entry name" value="HTH_AraC"/>
</dbReference>
<dbReference type="InterPro" id="IPR051034">
    <property type="entry name" value="Mito_Enoyl-ACP_Reductase"/>
</dbReference>
<dbReference type="InterPro" id="IPR036291">
    <property type="entry name" value="NAD(P)-bd_dom_sf"/>
</dbReference>
<dbReference type="PANTHER" id="PTHR43981">
    <property type="entry name" value="ENOYL-[ACYL-CARRIER-PROTEIN] REDUCTASE, MITOCHONDRIAL"/>
    <property type="match status" value="1"/>
</dbReference>
<dbReference type="PANTHER" id="PTHR43981:SF2">
    <property type="entry name" value="ENOYL-[ACYL-CARRIER-PROTEIN] REDUCTASE, MITOCHONDRIAL"/>
    <property type="match status" value="1"/>
</dbReference>
<dbReference type="SUPFAM" id="SSF50129">
    <property type="entry name" value="GroES-like"/>
    <property type="match status" value="1"/>
</dbReference>
<dbReference type="SUPFAM" id="SSF51735">
    <property type="entry name" value="NAD(P)-binding Rossmann-fold domains"/>
    <property type="match status" value="1"/>
</dbReference>
<gene>
    <name type="primary">ETR1</name>
    <name type="ordered locus">CAGL0B04323g</name>
</gene>
<feature type="transit peptide" description="Mitochondrion" evidence="4">
    <location>
        <begin position="1"/>
        <end status="unknown"/>
    </location>
</feature>
<feature type="chain" id="PRO_0000000897" description="Enoyl-[acyl-carrier-protein] reductase, mitochondrial">
    <location>
        <begin status="unknown"/>
        <end position="385"/>
    </location>
</feature>
<feature type="active site" description="Proton donor" evidence="3">
    <location>
        <position position="78"/>
    </location>
</feature>
<feature type="binding site" evidence="3">
    <location>
        <position position="162"/>
    </location>
    <ligand>
        <name>NADP(+)</name>
        <dbReference type="ChEBI" id="CHEBI:58349"/>
    </ligand>
</feature>
<feature type="binding site" evidence="3">
    <location>
        <begin position="190"/>
        <end position="193"/>
    </location>
    <ligand>
        <name>NADP(+)</name>
        <dbReference type="ChEBI" id="CHEBI:58349"/>
    </ligand>
</feature>
<feature type="binding site" evidence="3">
    <location>
        <begin position="213"/>
        <end position="215"/>
    </location>
    <ligand>
        <name>NADP(+)</name>
        <dbReference type="ChEBI" id="CHEBI:58349"/>
    </ligand>
</feature>
<feature type="binding site" evidence="3">
    <location>
        <begin position="288"/>
        <end position="291"/>
    </location>
    <ligand>
        <name>NADP(+)</name>
        <dbReference type="ChEBI" id="CHEBI:58349"/>
    </ligand>
</feature>
<feature type="binding site" evidence="3">
    <location>
        <begin position="313"/>
        <end position="315"/>
    </location>
    <ligand>
        <name>NADP(+)</name>
        <dbReference type="ChEBI" id="CHEBI:58349"/>
    </ligand>
</feature>
<feature type="binding site" evidence="1">
    <location>
        <position position="378"/>
    </location>
    <ligand>
        <name>NADP(+)</name>
        <dbReference type="ChEBI" id="CHEBI:58349"/>
    </ligand>
</feature>